<organism>
    <name type="scientific">Brucella melitensis biotype 1 (strain ATCC 23456 / CCUG 17765 / NCTC 10094 / 16M)</name>
    <dbReference type="NCBI Taxonomy" id="224914"/>
    <lineage>
        <taxon>Bacteria</taxon>
        <taxon>Pseudomonadati</taxon>
        <taxon>Pseudomonadota</taxon>
        <taxon>Alphaproteobacteria</taxon>
        <taxon>Hyphomicrobiales</taxon>
        <taxon>Brucellaceae</taxon>
        <taxon>Brucella/Ochrobactrum group</taxon>
        <taxon>Brucella</taxon>
    </lineage>
</organism>
<protein>
    <recommendedName>
        <fullName evidence="1">Macrolide export ATP-binding/permease protein MacB</fullName>
        <ecNumber evidence="1">7.6.2.-</ecNumber>
    </recommendedName>
</protein>
<proteinExistence type="inferred from homology"/>
<comment type="function">
    <text evidence="1">Non-canonical ABC transporter that contains transmembrane domains (TMD), which form a pore in the inner membrane, and an ATP-binding domain (NBD), which is responsible for energy generation. Confers resistance against macrolides.</text>
</comment>
<comment type="subunit">
    <text evidence="1">Homodimer.</text>
</comment>
<comment type="subcellular location">
    <subcellularLocation>
        <location evidence="1">Cell inner membrane</location>
        <topology evidence="1">Multi-pass membrane protein</topology>
    </subcellularLocation>
</comment>
<comment type="similarity">
    <text evidence="1">Belongs to the ABC transporter superfamily. Macrolide exporter (TC 3.A.1.122) family.</text>
</comment>
<comment type="sequence caution" evidence="2">
    <conflict type="frameshift">
        <sequence resource="EMBL-CDS" id="AAL51541"/>
    </conflict>
    <text>Produces two separate ORFs.</text>
</comment>
<comment type="sequence caution" evidence="2">
    <conflict type="frameshift">
        <sequence resource="EMBL-CDS" id="AAL51542"/>
    </conflict>
    <text>Produces two separate ORFs.</text>
</comment>
<keyword id="KW-0046">Antibiotic resistance</keyword>
<keyword id="KW-0067">ATP-binding</keyword>
<keyword id="KW-0997">Cell inner membrane</keyword>
<keyword id="KW-1003">Cell membrane</keyword>
<keyword id="KW-0472">Membrane</keyword>
<keyword id="KW-0547">Nucleotide-binding</keyword>
<keyword id="KW-1278">Translocase</keyword>
<keyword id="KW-0812">Transmembrane</keyword>
<keyword id="KW-1133">Transmembrane helix</keyword>
<keyword id="KW-0813">Transport</keyword>
<sequence length="647" mass="69107">MAGAPLIRLEDICKTFHNGDLAVEVLHGITLDIRAGEFVAIMGASGSGKSTLMNILGCLDTPTGGRYLLDGEDVSTLNADELATLRRRTFGFVFQSYNLIPTSTAQENVEVPAIYAGTPAAERRKRAAALLNALKLGDRLDHRPSQLSGGQQQRVSIARALMNGGRIILADEPTGALDSQSGEDVMELLRSMHQQGHTVIVITHAREVAERADRLIEIRDGQILSDTTKRDIHTPEATLQPHEEIAGNGAHIADISEAVKMALRALRANIFRTVLTLLGIIIGVSSVVTMLAIGTGAQNTILDRINAMGTDLILVRPAMAGFRGSGSIATLVPQDADAILELPNVKSAVPEVTGTVTLRRGNVDYQSQANGTVPAFSLSEIVESRQRQLHHPERYRYLRPCGWLGTTVVKTLFPDGSNPVGDYILIQKIPFQIIGTLEPKGAGFGGSDQDDVVVVPLSTGNLRLFGQKYVRSITVQVKDSSLIDTTQNQIQSLLDQRHKKRDTMITNMSSVREDAAAMGKTMTVFLGSVAAISLLVGGIGVMNIMLVSVTERTREIGVRMATGARRRDILLQFIIEALSVSAIGGAIGVILGLGAAALASWAGLSVGYSFGPVLLAFACAFATGLIFGFLPARKASRLLPAVALSSE</sequence>
<dbReference type="EC" id="7.6.2.-" evidence="1"/>
<dbReference type="EMBL" id="AE008917">
    <property type="protein sequence ID" value="AAL51541.1"/>
    <property type="status" value="ALT_SEQ"/>
    <property type="molecule type" value="Genomic_DNA"/>
</dbReference>
<dbReference type="EMBL" id="AE008917">
    <property type="protein sequence ID" value="AAL51542.1"/>
    <property type="status" value="ALT_SEQ"/>
    <property type="molecule type" value="Genomic_DNA"/>
</dbReference>
<dbReference type="PIR" id="AB3297">
    <property type="entry name" value="AB3297"/>
</dbReference>
<dbReference type="PIR" id="AC3297">
    <property type="entry name" value="AC3297"/>
</dbReference>
<dbReference type="SMR" id="Q8YIT2"/>
<dbReference type="KEGG" id="bme:BMEI0360"/>
<dbReference type="KEGG" id="bme:BMEI0361"/>
<dbReference type="eggNOG" id="COG1136">
    <property type="taxonomic scope" value="Bacteria"/>
</dbReference>
<dbReference type="eggNOG" id="COG4591">
    <property type="taxonomic scope" value="Bacteria"/>
</dbReference>
<dbReference type="Proteomes" id="UP000000419">
    <property type="component" value="Chromosome I"/>
</dbReference>
<dbReference type="GO" id="GO:0005886">
    <property type="term" value="C:plasma membrane"/>
    <property type="evidence" value="ECO:0007669"/>
    <property type="project" value="UniProtKB-SubCell"/>
</dbReference>
<dbReference type="GO" id="GO:0005524">
    <property type="term" value="F:ATP binding"/>
    <property type="evidence" value="ECO:0007669"/>
    <property type="project" value="UniProtKB-KW"/>
</dbReference>
<dbReference type="GO" id="GO:0016887">
    <property type="term" value="F:ATP hydrolysis activity"/>
    <property type="evidence" value="ECO:0007669"/>
    <property type="project" value="InterPro"/>
</dbReference>
<dbReference type="GO" id="GO:0022857">
    <property type="term" value="F:transmembrane transporter activity"/>
    <property type="evidence" value="ECO:0007669"/>
    <property type="project" value="TreeGrafter"/>
</dbReference>
<dbReference type="GO" id="GO:0046677">
    <property type="term" value="P:response to antibiotic"/>
    <property type="evidence" value="ECO:0007669"/>
    <property type="project" value="UniProtKB-KW"/>
</dbReference>
<dbReference type="CDD" id="cd03255">
    <property type="entry name" value="ABC_MJ0796_LolCDE_FtsE"/>
    <property type="match status" value="1"/>
</dbReference>
<dbReference type="FunFam" id="3.40.50.300:FF:000032">
    <property type="entry name" value="Export ABC transporter ATP-binding protein"/>
    <property type="match status" value="1"/>
</dbReference>
<dbReference type="Gene3D" id="3.40.50.300">
    <property type="entry name" value="P-loop containing nucleotide triphosphate hydrolases"/>
    <property type="match status" value="1"/>
</dbReference>
<dbReference type="InterPro" id="IPR003593">
    <property type="entry name" value="AAA+_ATPase"/>
</dbReference>
<dbReference type="InterPro" id="IPR003838">
    <property type="entry name" value="ABC3_permease_C"/>
</dbReference>
<dbReference type="InterPro" id="IPR003439">
    <property type="entry name" value="ABC_transporter-like_ATP-bd"/>
</dbReference>
<dbReference type="InterPro" id="IPR017871">
    <property type="entry name" value="ABC_transporter-like_CS"/>
</dbReference>
<dbReference type="InterPro" id="IPR017911">
    <property type="entry name" value="MacB-like_ATP-bd"/>
</dbReference>
<dbReference type="InterPro" id="IPR025857">
    <property type="entry name" value="MacB_PCD"/>
</dbReference>
<dbReference type="InterPro" id="IPR050250">
    <property type="entry name" value="Macrolide_Exporter_MacB"/>
</dbReference>
<dbReference type="InterPro" id="IPR027417">
    <property type="entry name" value="P-loop_NTPase"/>
</dbReference>
<dbReference type="PANTHER" id="PTHR30572:SF14">
    <property type="entry name" value="MACROLIDE EXPORT ATP-BINDING_PERMEASE PROTEIN MACB"/>
    <property type="match status" value="1"/>
</dbReference>
<dbReference type="PANTHER" id="PTHR30572">
    <property type="entry name" value="MEMBRANE COMPONENT OF TRANSPORTER-RELATED"/>
    <property type="match status" value="1"/>
</dbReference>
<dbReference type="Pfam" id="PF00005">
    <property type="entry name" value="ABC_tran"/>
    <property type="match status" value="1"/>
</dbReference>
<dbReference type="Pfam" id="PF02687">
    <property type="entry name" value="FtsX"/>
    <property type="match status" value="1"/>
</dbReference>
<dbReference type="Pfam" id="PF12704">
    <property type="entry name" value="MacB_PCD"/>
    <property type="match status" value="1"/>
</dbReference>
<dbReference type="SMART" id="SM00382">
    <property type="entry name" value="AAA"/>
    <property type="match status" value="1"/>
</dbReference>
<dbReference type="SUPFAM" id="SSF52540">
    <property type="entry name" value="P-loop containing nucleoside triphosphate hydrolases"/>
    <property type="match status" value="1"/>
</dbReference>
<dbReference type="PROSITE" id="PS00211">
    <property type="entry name" value="ABC_TRANSPORTER_1"/>
    <property type="match status" value="1"/>
</dbReference>
<dbReference type="PROSITE" id="PS50893">
    <property type="entry name" value="ABC_TRANSPORTER_2"/>
    <property type="match status" value="1"/>
</dbReference>
<dbReference type="PROSITE" id="PS51267">
    <property type="entry name" value="MACB"/>
    <property type="match status" value="1"/>
</dbReference>
<accession>Q8YIT2</accession>
<accession>Q8YIT1</accession>
<reference key="1">
    <citation type="journal article" date="2002" name="Proc. Natl. Acad. Sci. U.S.A.">
        <title>The genome sequence of the facultative intracellular pathogen Brucella melitensis.</title>
        <authorList>
            <person name="DelVecchio V.G."/>
            <person name="Kapatral V."/>
            <person name="Redkar R.J."/>
            <person name="Patra G."/>
            <person name="Mujer C."/>
            <person name="Los T."/>
            <person name="Ivanova N."/>
            <person name="Anderson I."/>
            <person name="Bhattacharyya A."/>
            <person name="Lykidis A."/>
            <person name="Reznik G."/>
            <person name="Jablonski L."/>
            <person name="Larsen N."/>
            <person name="D'Souza M."/>
            <person name="Bernal A."/>
            <person name="Mazur M."/>
            <person name="Goltsman E."/>
            <person name="Selkov E."/>
            <person name="Elzer P.H."/>
            <person name="Hagius S."/>
            <person name="O'Callaghan D."/>
            <person name="Letesson J.-J."/>
            <person name="Haselkorn R."/>
            <person name="Kyrpides N.C."/>
            <person name="Overbeek R."/>
        </authorList>
    </citation>
    <scope>NUCLEOTIDE SEQUENCE [LARGE SCALE GENOMIC DNA]</scope>
    <source>
        <strain>ATCC 23456 / CCUG 17765 / NCTC 10094 / 16M</strain>
    </source>
</reference>
<gene>
    <name evidence="1" type="primary">macB</name>
    <name type="ordered locus">BMEI0360/BMEI0361</name>
</gene>
<name>MACB_BRUME</name>
<evidence type="ECO:0000255" key="1">
    <source>
        <dbReference type="HAMAP-Rule" id="MF_01720"/>
    </source>
</evidence>
<evidence type="ECO:0000305" key="2"/>
<feature type="chain" id="PRO_0000269927" description="Macrolide export ATP-binding/permease protein MacB">
    <location>
        <begin position="1"/>
        <end position="647"/>
    </location>
</feature>
<feature type="transmembrane region" description="Helical" evidence="1">
    <location>
        <begin position="274"/>
        <end position="294"/>
    </location>
</feature>
<feature type="transmembrane region" description="Helical" evidence="1">
    <location>
        <begin position="529"/>
        <end position="549"/>
    </location>
</feature>
<feature type="transmembrane region" description="Helical" evidence="1">
    <location>
        <begin position="573"/>
        <end position="593"/>
    </location>
</feature>
<feature type="transmembrane region" description="Helical" evidence="1">
    <location>
        <begin position="610"/>
        <end position="630"/>
    </location>
</feature>
<feature type="domain" description="ABC transporter" evidence="1">
    <location>
        <begin position="7"/>
        <end position="245"/>
    </location>
</feature>
<feature type="binding site" evidence="1">
    <location>
        <begin position="43"/>
        <end position="50"/>
    </location>
    <ligand>
        <name>ATP</name>
        <dbReference type="ChEBI" id="CHEBI:30616"/>
    </ligand>
</feature>